<accession>B8CLH4</accession>
<keyword id="KW-0067">ATP-binding</keyword>
<keyword id="KW-0963">Cytoplasm</keyword>
<keyword id="KW-1015">Disulfide bond</keyword>
<keyword id="KW-0547">Nucleotide-binding</keyword>
<keyword id="KW-0694">RNA-binding</keyword>
<keyword id="KW-0808">Transferase</keyword>
<keyword id="KW-0819">tRNA processing</keyword>
<keyword id="KW-0820">tRNA-binding</keyword>
<organism>
    <name type="scientific">Shewanella piezotolerans (strain WP3 / JCM 13877)</name>
    <dbReference type="NCBI Taxonomy" id="225849"/>
    <lineage>
        <taxon>Bacteria</taxon>
        <taxon>Pseudomonadati</taxon>
        <taxon>Pseudomonadota</taxon>
        <taxon>Gammaproteobacteria</taxon>
        <taxon>Alteromonadales</taxon>
        <taxon>Shewanellaceae</taxon>
        <taxon>Shewanella</taxon>
    </lineage>
</organism>
<reference key="1">
    <citation type="journal article" date="2008" name="PLoS ONE">
        <title>Environmental adaptation: genomic analysis of the piezotolerant and psychrotolerant deep-sea iron reducing bacterium Shewanella piezotolerans WP3.</title>
        <authorList>
            <person name="Wang F."/>
            <person name="Wang J."/>
            <person name="Jian H."/>
            <person name="Zhang B."/>
            <person name="Li S."/>
            <person name="Wang F."/>
            <person name="Zeng X."/>
            <person name="Gao L."/>
            <person name="Bartlett D.H."/>
            <person name="Yu J."/>
            <person name="Hu S."/>
            <person name="Xiao X."/>
        </authorList>
    </citation>
    <scope>NUCLEOTIDE SEQUENCE [LARGE SCALE GENOMIC DNA]</scope>
    <source>
        <strain>WP3 / JCM 13877</strain>
    </source>
</reference>
<protein>
    <recommendedName>
        <fullName evidence="1">tRNA-specific 2-thiouridylase MnmA</fullName>
        <ecNumber evidence="1">2.8.1.13</ecNumber>
    </recommendedName>
</protein>
<gene>
    <name evidence="1" type="primary">mnmA</name>
    <name type="ordered locus">swp_1863</name>
</gene>
<dbReference type="EC" id="2.8.1.13" evidence="1"/>
<dbReference type="EMBL" id="CP000472">
    <property type="protein sequence ID" value="ACJ28625.1"/>
    <property type="molecule type" value="Genomic_DNA"/>
</dbReference>
<dbReference type="RefSeq" id="WP_020912003.1">
    <property type="nucleotide sequence ID" value="NC_011566.1"/>
</dbReference>
<dbReference type="SMR" id="B8CLH4"/>
<dbReference type="STRING" id="225849.swp_1863"/>
<dbReference type="KEGG" id="swp:swp_1863"/>
<dbReference type="eggNOG" id="COG0482">
    <property type="taxonomic scope" value="Bacteria"/>
</dbReference>
<dbReference type="HOGENOM" id="CLU_035188_1_0_6"/>
<dbReference type="OrthoDB" id="9800696at2"/>
<dbReference type="Proteomes" id="UP000000753">
    <property type="component" value="Chromosome"/>
</dbReference>
<dbReference type="GO" id="GO:0005737">
    <property type="term" value="C:cytoplasm"/>
    <property type="evidence" value="ECO:0007669"/>
    <property type="project" value="UniProtKB-SubCell"/>
</dbReference>
<dbReference type="GO" id="GO:0005524">
    <property type="term" value="F:ATP binding"/>
    <property type="evidence" value="ECO:0007669"/>
    <property type="project" value="UniProtKB-KW"/>
</dbReference>
<dbReference type="GO" id="GO:0000049">
    <property type="term" value="F:tRNA binding"/>
    <property type="evidence" value="ECO:0007669"/>
    <property type="project" value="UniProtKB-KW"/>
</dbReference>
<dbReference type="GO" id="GO:0103016">
    <property type="term" value="F:tRNA-uridine 2-sulfurtransferase activity"/>
    <property type="evidence" value="ECO:0007669"/>
    <property type="project" value="UniProtKB-EC"/>
</dbReference>
<dbReference type="GO" id="GO:0002143">
    <property type="term" value="P:tRNA wobble position uridine thiolation"/>
    <property type="evidence" value="ECO:0007669"/>
    <property type="project" value="TreeGrafter"/>
</dbReference>
<dbReference type="CDD" id="cd01998">
    <property type="entry name" value="MnmA_TRMU-like"/>
    <property type="match status" value="1"/>
</dbReference>
<dbReference type="FunFam" id="2.30.30.280:FF:000001">
    <property type="entry name" value="tRNA-specific 2-thiouridylase MnmA"/>
    <property type="match status" value="1"/>
</dbReference>
<dbReference type="FunFam" id="2.40.30.10:FF:000023">
    <property type="entry name" value="tRNA-specific 2-thiouridylase MnmA"/>
    <property type="match status" value="1"/>
</dbReference>
<dbReference type="FunFam" id="3.40.50.620:FF:000004">
    <property type="entry name" value="tRNA-specific 2-thiouridylase MnmA"/>
    <property type="match status" value="1"/>
</dbReference>
<dbReference type="Gene3D" id="2.30.30.280">
    <property type="entry name" value="Adenine nucleotide alpha hydrolases-like domains"/>
    <property type="match status" value="1"/>
</dbReference>
<dbReference type="Gene3D" id="3.40.50.620">
    <property type="entry name" value="HUPs"/>
    <property type="match status" value="1"/>
</dbReference>
<dbReference type="Gene3D" id="2.40.30.10">
    <property type="entry name" value="Translation factors"/>
    <property type="match status" value="1"/>
</dbReference>
<dbReference type="HAMAP" id="MF_00144">
    <property type="entry name" value="tRNA_thiouridyl_MnmA"/>
    <property type="match status" value="1"/>
</dbReference>
<dbReference type="InterPro" id="IPR004506">
    <property type="entry name" value="MnmA-like"/>
</dbReference>
<dbReference type="InterPro" id="IPR046885">
    <property type="entry name" value="MnmA-like_C"/>
</dbReference>
<dbReference type="InterPro" id="IPR046884">
    <property type="entry name" value="MnmA-like_central"/>
</dbReference>
<dbReference type="InterPro" id="IPR023382">
    <property type="entry name" value="MnmA-like_central_sf"/>
</dbReference>
<dbReference type="InterPro" id="IPR014729">
    <property type="entry name" value="Rossmann-like_a/b/a_fold"/>
</dbReference>
<dbReference type="NCBIfam" id="NF001138">
    <property type="entry name" value="PRK00143.1"/>
    <property type="match status" value="1"/>
</dbReference>
<dbReference type="NCBIfam" id="TIGR00420">
    <property type="entry name" value="trmU"/>
    <property type="match status" value="1"/>
</dbReference>
<dbReference type="PANTHER" id="PTHR11933:SF5">
    <property type="entry name" value="MITOCHONDRIAL TRNA-SPECIFIC 2-THIOURIDYLASE 1"/>
    <property type="match status" value="1"/>
</dbReference>
<dbReference type="PANTHER" id="PTHR11933">
    <property type="entry name" value="TRNA 5-METHYLAMINOMETHYL-2-THIOURIDYLATE -METHYLTRANSFERASE"/>
    <property type="match status" value="1"/>
</dbReference>
<dbReference type="Pfam" id="PF03054">
    <property type="entry name" value="tRNA_Me_trans"/>
    <property type="match status" value="1"/>
</dbReference>
<dbReference type="Pfam" id="PF20258">
    <property type="entry name" value="tRNA_Me_trans_C"/>
    <property type="match status" value="1"/>
</dbReference>
<dbReference type="Pfam" id="PF20259">
    <property type="entry name" value="tRNA_Me_trans_M"/>
    <property type="match status" value="1"/>
</dbReference>
<dbReference type="SUPFAM" id="SSF52402">
    <property type="entry name" value="Adenine nucleotide alpha hydrolases-like"/>
    <property type="match status" value="1"/>
</dbReference>
<sequence length="371" mass="41360">MTSIDPTHLGKKVIVGMSGGVDSSVSAYLLMKQGYQVEGLFMKNWEEDDTDEYCAAADDLKDAQAVCDKLGIKLHTVNFASEYWDNVFEYFLAEYKAGRTPNPDIMCNKEIKFKAFLEFADEILDADYIAMGHYVRRRDIDGTSQMLRGVDGNKDQSYFLYTLSHEQVARSLFPVGELEKSEVRDIAKEMGLITHDKKDSTGICFIGERKFTDFLSTFLPAQPGNIETSEGEVIGQHQGLMYHTLGQRKGLGIGGLKNSSEDPWYVVEKDLVRNVLVVGQGGNHPRLMSNGLLANQLHWVDRKGPAEGAKITLKTRYRQHDVPCTVTYDSDDQIRVIFDEAVAAVTPGQSAVFYDGEICLGGGIIDVLIRD</sequence>
<name>MNMA_SHEPW</name>
<proteinExistence type="inferred from homology"/>
<evidence type="ECO:0000255" key="1">
    <source>
        <dbReference type="HAMAP-Rule" id="MF_00144"/>
    </source>
</evidence>
<feature type="chain" id="PRO_1000198626" description="tRNA-specific 2-thiouridylase MnmA">
    <location>
        <begin position="1"/>
        <end position="371"/>
    </location>
</feature>
<feature type="region of interest" description="Interaction with target base in tRNA" evidence="1">
    <location>
        <begin position="102"/>
        <end position="104"/>
    </location>
</feature>
<feature type="region of interest" description="Interaction with tRNA" evidence="1">
    <location>
        <begin position="154"/>
        <end position="156"/>
    </location>
</feature>
<feature type="region of interest" description="Interaction with tRNA" evidence="1">
    <location>
        <begin position="316"/>
        <end position="317"/>
    </location>
</feature>
<feature type="active site" description="Nucleophile" evidence="1">
    <location>
        <position position="107"/>
    </location>
</feature>
<feature type="active site" description="Cysteine persulfide intermediate" evidence="1">
    <location>
        <position position="204"/>
    </location>
</feature>
<feature type="binding site" evidence="1">
    <location>
        <begin position="16"/>
        <end position="23"/>
    </location>
    <ligand>
        <name>ATP</name>
        <dbReference type="ChEBI" id="CHEBI:30616"/>
    </ligand>
</feature>
<feature type="binding site" evidence="1">
    <location>
        <position position="42"/>
    </location>
    <ligand>
        <name>ATP</name>
        <dbReference type="ChEBI" id="CHEBI:30616"/>
    </ligand>
</feature>
<feature type="binding site" evidence="1">
    <location>
        <position position="132"/>
    </location>
    <ligand>
        <name>ATP</name>
        <dbReference type="ChEBI" id="CHEBI:30616"/>
    </ligand>
</feature>
<feature type="site" description="Interaction with tRNA" evidence="1">
    <location>
        <position position="133"/>
    </location>
</feature>
<feature type="site" description="Interaction with tRNA" evidence="1">
    <location>
        <position position="349"/>
    </location>
</feature>
<feature type="disulfide bond" description="Alternate" evidence="1">
    <location>
        <begin position="107"/>
        <end position="204"/>
    </location>
</feature>
<comment type="function">
    <text evidence="1">Catalyzes the 2-thiolation of uridine at the wobble position (U34) of tRNA, leading to the formation of s(2)U34.</text>
</comment>
<comment type="catalytic activity">
    <reaction evidence="1">
        <text>S-sulfanyl-L-cysteinyl-[protein] + uridine(34) in tRNA + AH2 + ATP = 2-thiouridine(34) in tRNA + L-cysteinyl-[protein] + A + AMP + diphosphate + H(+)</text>
        <dbReference type="Rhea" id="RHEA:47032"/>
        <dbReference type="Rhea" id="RHEA-COMP:10131"/>
        <dbReference type="Rhea" id="RHEA-COMP:11726"/>
        <dbReference type="Rhea" id="RHEA-COMP:11727"/>
        <dbReference type="Rhea" id="RHEA-COMP:11728"/>
        <dbReference type="ChEBI" id="CHEBI:13193"/>
        <dbReference type="ChEBI" id="CHEBI:15378"/>
        <dbReference type="ChEBI" id="CHEBI:17499"/>
        <dbReference type="ChEBI" id="CHEBI:29950"/>
        <dbReference type="ChEBI" id="CHEBI:30616"/>
        <dbReference type="ChEBI" id="CHEBI:33019"/>
        <dbReference type="ChEBI" id="CHEBI:61963"/>
        <dbReference type="ChEBI" id="CHEBI:65315"/>
        <dbReference type="ChEBI" id="CHEBI:87170"/>
        <dbReference type="ChEBI" id="CHEBI:456215"/>
        <dbReference type="EC" id="2.8.1.13"/>
    </reaction>
</comment>
<comment type="subcellular location">
    <subcellularLocation>
        <location evidence="1">Cytoplasm</location>
    </subcellularLocation>
</comment>
<comment type="similarity">
    <text evidence="1">Belongs to the MnmA/TRMU family.</text>
</comment>